<reference key="1">
    <citation type="journal article" date="2004" name="Genome Res.">
        <title>The status, quality, and expansion of the NIH full-length cDNA project: the Mammalian Gene Collection (MGC).</title>
        <authorList>
            <consortium name="The MGC Project Team"/>
        </authorList>
    </citation>
    <scope>NUCLEOTIDE SEQUENCE [LARGE SCALE MRNA]</scope>
    <source>
        <tissue>Lung</tissue>
    </source>
</reference>
<organism>
    <name type="scientific">Rattus norvegicus</name>
    <name type="common">Rat</name>
    <dbReference type="NCBI Taxonomy" id="10116"/>
    <lineage>
        <taxon>Eukaryota</taxon>
        <taxon>Metazoa</taxon>
        <taxon>Chordata</taxon>
        <taxon>Craniata</taxon>
        <taxon>Vertebrata</taxon>
        <taxon>Euteleostomi</taxon>
        <taxon>Mammalia</taxon>
        <taxon>Eutheria</taxon>
        <taxon>Euarchontoglires</taxon>
        <taxon>Glires</taxon>
        <taxon>Rodentia</taxon>
        <taxon>Myomorpha</taxon>
        <taxon>Muroidea</taxon>
        <taxon>Muridae</taxon>
        <taxon>Murinae</taxon>
        <taxon>Rattus</taxon>
    </lineage>
</organism>
<sequence length="354" mass="39617">MGRLVALSLLGIGLALLGERFLALRSRLKASREVESVDLPNCRLIKGIETGAEDIDILPNGLAFFSVGLKFPGLHSFAPDKPGGILMMDLKEEKPRALELRVSWGFDLASFNPHGISTFIDDDDTVYLFVVNHPEFKNTVEIFKFQEEENSLLHLKTIKHELLPSVNDVIAVGPSHFYATNDHYFSDPFLKYLETYLNLRWANVVYYSPEEVKLVAEGFDSANGINISPDKKYVYVADILAHEIHVLEKQPNMNLTQLKVLQLGTLVDNLSIDPSSGDIWVGCHPNGQKLFVYDPNHPPSSEVLRIQNILSEKPSVTTVYINNGSVLQGSSVATIYDRKLLVGTLYQRALYCEL</sequence>
<feature type="chain" id="PRO_0000223289" description="Serum paraoxonase/arylesterase 2">
    <location>
        <begin position="1"/>
        <end position="354"/>
    </location>
</feature>
<feature type="signal peptide" description="Not cleaved" evidence="2">
    <location>
        <begin position="1"/>
        <end status="unknown"/>
    </location>
</feature>
<feature type="active site" description="Proton acceptor" evidence="1">
    <location>
        <position position="114"/>
    </location>
</feature>
<feature type="binding site" evidence="1">
    <location>
        <position position="53"/>
    </location>
    <ligand>
        <name>Ca(2+)</name>
        <dbReference type="ChEBI" id="CHEBI:29108"/>
        <label>1</label>
        <note>catalytic</note>
    </ligand>
</feature>
<feature type="binding site" evidence="1">
    <location>
        <position position="54"/>
    </location>
    <ligand>
        <name>Ca(2+)</name>
        <dbReference type="ChEBI" id="CHEBI:29108"/>
        <label>2</label>
    </ligand>
</feature>
<feature type="binding site" evidence="1">
    <location>
        <position position="116"/>
    </location>
    <ligand>
        <name>Ca(2+)</name>
        <dbReference type="ChEBI" id="CHEBI:29108"/>
        <label>2</label>
    </ligand>
</feature>
<feature type="binding site" evidence="1">
    <location>
        <position position="167"/>
    </location>
    <ligand>
        <name>Ca(2+)</name>
        <dbReference type="ChEBI" id="CHEBI:29108"/>
        <label>1</label>
        <note>catalytic</note>
    </ligand>
</feature>
<feature type="binding site" evidence="1">
    <location>
        <position position="168"/>
    </location>
    <ligand>
        <name>Ca(2+)</name>
        <dbReference type="ChEBI" id="CHEBI:29108"/>
        <label>2</label>
    </ligand>
</feature>
<feature type="binding site" evidence="1">
    <location>
        <position position="223"/>
    </location>
    <ligand>
        <name>Ca(2+)</name>
        <dbReference type="ChEBI" id="CHEBI:29108"/>
        <label>1</label>
        <note>catalytic</note>
    </ligand>
</feature>
<feature type="binding site" evidence="1">
    <location>
        <position position="268"/>
    </location>
    <ligand>
        <name>Ca(2+)</name>
        <dbReference type="ChEBI" id="CHEBI:29108"/>
        <label>1</label>
        <note>catalytic</note>
    </ligand>
</feature>
<feature type="binding site" evidence="1">
    <location>
        <position position="269"/>
    </location>
    <ligand>
        <name>Ca(2+)</name>
        <dbReference type="ChEBI" id="CHEBI:29108"/>
        <label>1</label>
        <note>catalytic</note>
    </ligand>
</feature>
<feature type="glycosylation site" description="N-linked (GlcNAc...) asparagine" evidence="2">
    <location>
        <position position="254"/>
    </location>
</feature>
<feature type="glycosylation site" description="N-linked (GlcNAc...) asparagine" evidence="2">
    <location>
        <position position="269"/>
    </location>
</feature>
<feature type="glycosylation site" description="N-linked (GlcNAc...) asparagine" evidence="2">
    <location>
        <position position="323"/>
    </location>
</feature>
<feature type="disulfide bond" evidence="1">
    <location>
        <begin position="42"/>
        <end position="352"/>
    </location>
</feature>
<dbReference type="EC" id="3.1.1.2"/>
<dbReference type="EC" id="3.1.1.81"/>
<dbReference type="EMBL" id="BC079462">
    <property type="protein sequence ID" value="AAH79462.1"/>
    <property type="molecule type" value="mRNA"/>
</dbReference>
<dbReference type="RefSeq" id="NP_001013100.1">
    <property type="nucleotide sequence ID" value="NM_001013082.1"/>
</dbReference>
<dbReference type="SMR" id="Q6AXM8"/>
<dbReference type="FunCoup" id="Q6AXM8">
    <property type="interactions" value="436"/>
</dbReference>
<dbReference type="STRING" id="10116.ENSRNOP00000033943"/>
<dbReference type="GlyCosmos" id="Q6AXM8">
    <property type="glycosylation" value="3 sites, No reported glycans"/>
</dbReference>
<dbReference type="GlyGen" id="Q6AXM8">
    <property type="glycosylation" value="4 sites"/>
</dbReference>
<dbReference type="PhosphoSitePlus" id="Q6AXM8"/>
<dbReference type="PaxDb" id="10116-ENSRNOP00000033943"/>
<dbReference type="GeneID" id="296851"/>
<dbReference type="KEGG" id="rno:296851"/>
<dbReference type="UCSC" id="RGD:1309954">
    <property type="organism name" value="rat"/>
</dbReference>
<dbReference type="AGR" id="RGD:1309954"/>
<dbReference type="CTD" id="5445"/>
<dbReference type="RGD" id="1309954">
    <property type="gene designation" value="Pon2"/>
</dbReference>
<dbReference type="VEuPathDB" id="HostDB:ENSRNOG00000009112"/>
<dbReference type="eggNOG" id="ENOG502QUCT">
    <property type="taxonomic scope" value="Eukaryota"/>
</dbReference>
<dbReference type="HOGENOM" id="CLU_049839_0_1_1"/>
<dbReference type="InParanoid" id="Q6AXM8"/>
<dbReference type="OrthoDB" id="31337at9989"/>
<dbReference type="PhylomeDB" id="Q6AXM8"/>
<dbReference type="TreeFam" id="TF322436"/>
<dbReference type="Reactome" id="R-RNO-2142688">
    <property type="pathway name" value="Synthesis of 5-eicosatetraenoic acids"/>
</dbReference>
<dbReference type="PRO" id="PR:Q6AXM8"/>
<dbReference type="Proteomes" id="UP000002494">
    <property type="component" value="Chromosome 4"/>
</dbReference>
<dbReference type="Bgee" id="ENSRNOG00000009112">
    <property type="expression patterns" value="Expressed in lung and 20 other cell types or tissues"/>
</dbReference>
<dbReference type="GO" id="GO:0005576">
    <property type="term" value="C:extracellular region"/>
    <property type="evidence" value="ECO:0007669"/>
    <property type="project" value="InterPro"/>
</dbReference>
<dbReference type="GO" id="GO:0005886">
    <property type="term" value="C:plasma membrane"/>
    <property type="evidence" value="ECO:0000266"/>
    <property type="project" value="RGD"/>
</dbReference>
<dbReference type="GO" id="GO:0102007">
    <property type="term" value="F:acyl-L-homoserine-lactone lactonohydrolase activity"/>
    <property type="evidence" value="ECO:0000266"/>
    <property type="project" value="RGD"/>
</dbReference>
<dbReference type="GO" id="GO:0004064">
    <property type="term" value="F:arylesterase activity"/>
    <property type="evidence" value="ECO:0000318"/>
    <property type="project" value="GO_Central"/>
</dbReference>
<dbReference type="GO" id="GO:0046872">
    <property type="term" value="F:metal ion binding"/>
    <property type="evidence" value="ECO:0007669"/>
    <property type="project" value="UniProtKB-KW"/>
</dbReference>
<dbReference type="GO" id="GO:0042803">
    <property type="term" value="F:protein homodimerization activity"/>
    <property type="evidence" value="ECO:0000266"/>
    <property type="project" value="RGD"/>
</dbReference>
<dbReference type="GO" id="GO:1901335">
    <property type="term" value="P:lactone catabolic process"/>
    <property type="evidence" value="ECO:0000266"/>
    <property type="project" value="RGD"/>
</dbReference>
<dbReference type="GO" id="GO:0006979">
    <property type="term" value="P:response to oxidative stress"/>
    <property type="evidence" value="ECO:0000270"/>
    <property type="project" value="RGD"/>
</dbReference>
<dbReference type="GO" id="GO:0009636">
    <property type="term" value="P:response to toxic substance"/>
    <property type="evidence" value="ECO:0000318"/>
    <property type="project" value="GO_Central"/>
</dbReference>
<dbReference type="FunFam" id="2.120.10.30:FF:000023">
    <property type="entry name" value="Serum paraoxonase/arylesterase 2"/>
    <property type="match status" value="1"/>
</dbReference>
<dbReference type="Gene3D" id="2.120.10.30">
    <property type="entry name" value="TolB, C-terminal domain"/>
    <property type="match status" value="1"/>
</dbReference>
<dbReference type="InterPro" id="IPR011042">
    <property type="entry name" value="6-blade_b-propeller_TolB-like"/>
</dbReference>
<dbReference type="InterPro" id="IPR002640">
    <property type="entry name" value="Arylesterase"/>
</dbReference>
<dbReference type="InterPro" id="IPR008364">
    <property type="entry name" value="Paraoxonase2"/>
</dbReference>
<dbReference type="InterPro" id="IPR051288">
    <property type="entry name" value="Serum_paraoxonase/arylesterase"/>
</dbReference>
<dbReference type="PANTHER" id="PTHR11799">
    <property type="entry name" value="PARAOXONASE"/>
    <property type="match status" value="1"/>
</dbReference>
<dbReference type="PANTHER" id="PTHR11799:SF17">
    <property type="entry name" value="SERUM PARAOXONASE_ARYLESTERASE 2"/>
    <property type="match status" value="1"/>
</dbReference>
<dbReference type="Pfam" id="PF01731">
    <property type="entry name" value="Arylesterase"/>
    <property type="match status" value="1"/>
</dbReference>
<dbReference type="PRINTS" id="PR01785">
    <property type="entry name" value="PARAOXONASE"/>
</dbReference>
<dbReference type="PRINTS" id="PR01787">
    <property type="entry name" value="PARAOXONASE2"/>
</dbReference>
<dbReference type="SUPFAM" id="SSF63829">
    <property type="entry name" value="Calcium-dependent phosphotriesterase"/>
    <property type="match status" value="1"/>
</dbReference>
<accession>Q6AXM8</accession>
<proteinExistence type="evidence at transcript level"/>
<gene>
    <name type="primary">Pon2</name>
</gene>
<protein>
    <recommendedName>
        <fullName>Serum paraoxonase/arylesterase 2</fullName>
        <shortName>PON 2</shortName>
        <ecNumber>3.1.1.2</ecNumber>
        <ecNumber>3.1.1.81</ecNumber>
    </recommendedName>
    <alternativeName>
        <fullName>Aromatic esterase 2</fullName>
        <shortName>A-esterase 2</shortName>
    </alternativeName>
    <alternativeName>
        <fullName>Serum aryldialkylphosphatase 2</fullName>
    </alternativeName>
</protein>
<comment type="function">
    <text evidence="1">Capable of hydrolyzing lactones and a number of aromatic carboxylic acid esters.</text>
</comment>
<comment type="catalytic activity">
    <reaction>
        <text>a phenyl acetate + H2O = a phenol + acetate + H(+)</text>
        <dbReference type="Rhea" id="RHEA:17309"/>
        <dbReference type="ChEBI" id="CHEBI:15377"/>
        <dbReference type="ChEBI" id="CHEBI:15378"/>
        <dbReference type="ChEBI" id="CHEBI:30089"/>
        <dbReference type="ChEBI" id="CHEBI:33853"/>
        <dbReference type="ChEBI" id="CHEBI:140310"/>
        <dbReference type="EC" id="3.1.1.2"/>
    </reaction>
</comment>
<comment type="catalytic activity">
    <reaction>
        <text>an N-acyl-L-homoserine lactone + H2O = an N-acyl-L-homoserine + H(+)</text>
        <dbReference type="Rhea" id="RHEA:22576"/>
        <dbReference type="ChEBI" id="CHEBI:15377"/>
        <dbReference type="ChEBI" id="CHEBI:15378"/>
        <dbReference type="ChEBI" id="CHEBI:55474"/>
        <dbReference type="ChEBI" id="CHEBI:58921"/>
        <dbReference type="EC" id="3.1.1.81"/>
    </reaction>
</comment>
<comment type="cofactor">
    <cofactor evidence="1">
        <name>Ca(2+)</name>
        <dbReference type="ChEBI" id="CHEBI:29108"/>
    </cofactor>
    <text evidence="1">Binds 2 calcium ions per subunit.</text>
</comment>
<comment type="subunit">
    <text evidence="1">Homotrimer.</text>
</comment>
<comment type="subcellular location">
    <subcellularLocation>
        <location evidence="1">Membrane</location>
        <topology evidence="1">Peripheral membrane protein</topology>
    </subcellularLocation>
</comment>
<comment type="PTM">
    <text evidence="1">Glycosylated.</text>
</comment>
<comment type="PTM">
    <text evidence="1">The signal sequence is not cleaved.</text>
</comment>
<comment type="similarity">
    <text evidence="3">Belongs to the paraoxonase family.</text>
</comment>
<name>PON2_RAT</name>
<keyword id="KW-0106">Calcium</keyword>
<keyword id="KW-1015">Disulfide bond</keyword>
<keyword id="KW-0325">Glycoprotein</keyword>
<keyword id="KW-0378">Hydrolase</keyword>
<keyword id="KW-0472">Membrane</keyword>
<keyword id="KW-0479">Metal-binding</keyword>
<keyword id="KW-1185">Reference proteome</keyword>
<keyword id="KW-0732">Signal</keyword>
<evidence type="ECO:0000250" key="1"/>
<evidence type="ECO:0000255" key="2"/>
<evidence type="ECO:0000305" key="3"/>